<sequence length="524" mass="58535">MVPQALLFVPLLVFPLCFGKFPIYTIPDKLGPWSPIDIHHLSCPNNLVVEDEGCTNLSGFSYMELKVGYISAIKMNGFTCTGVVTEAETYTNFVGYVTTTFKRKHFRPTPDACRAAYNWKMAGDPRYEESLHNPYPDYHWLRTVKTTKESLVIISPSVADLDPYDRSLHSRVFPGGNCSGVAVSSTYCSTNHDYTIWMPENPRLGMSCDIFTNSRGKRASKGSETCGFVDERGLYKSLKGACKLKLCGVLGLRLMDGTWVAMQTSNETKWCPPGQLVNLHDFRSDEIEHLVVEELVKKREECLDALESIMTTKSVSFRRLSHLRKLVPGFGKAYTIFNKTLMEADAHYKSVRTWNEIIPSKGCLRVGGRCHPHVNGVFFNGIILGPDGNVLIPEMQSSLLQQHMELLVSSVIPLMHPLADPSTVFKNGDEAEDFVEVHLPDVHERISGVDLGLPNWGKYVLLSAGALTALMLIIFLMTCWRRVNRSEPTQHNLRGTGREVSVTPQSGKIISSWESYKSGGETGL</sequence>
<name>GLYCO_RABVP</name>
<keyword id="KW-0002">3D-structure</keyword>
<keyword id="KW-1015">Disulfide bond</keyword>
<keyword id="KW-0325">Glycoprotein</keyword>
<keyword id="KW-0449">Lipoprotein</keyword>
<keyword id="KW-0472">Membrane</keyword>
<keyword id="KW-0564">Palmitate</keyword>
<keyword id="KW-1185">Reference proteome</keyword>
<keyword id="KW-0732">Signal</keyword>
<keyword id="KW-0812">Transmembrane</keyword>
<keyword id="KW-1133">Transmembrane helix</keyword>
<keyword id="KW-0261">Viral envelope protein</keyword>
<keyword id="KW-0946">Virion</keyword>
<organismHost>
    <name type="scientific">Homo sapiens</name>
    <name type="common">Human</name>
    <dbReference type="NCBI Taxonomy" id="9606"/>
</organismHost>
<organismHost>
    <name type="scientific">Mammalia</name>
    <dbReference type="NCBI Taxonomy" id="40674"/>
</organismHost>
<protein>
    <recommendedName>
        <fullName>Glycoprotein</fullName>
    </recommendedName>
</protein>
<gene>
    <name type="primary">G</name>
</gene>
<proteinExistence type="evidence at protein level"/>
<comment type="function">
    <text evidence="1 4 6 7">Attaches the virus to host cellular receptor, inducing endocytosis of the virion by using different host proteins including TFRC, GRM2 and ITGB1 (PubMed:30028877, PubMed:31666383, PubMed:36779762). In the endosome, the acidic pH induces conformational changes in the glycoprotein trimer, which trigger fusion between virus and cell membrane. There is convincing in vitro evidence that the muscular form of the nicotinic acetylcholine receptor (nAChR), the neuronal cell adhesion molecule (NCAM), and the p75 neurotrophin receptor (p75NTR) bind glycoprotein and thereby facilitate rabies virus entry into cells (By similarity).</text>
</comment>
<comment type="subunit">
    <text evidence="1 3 4 5 6 7">Homotrimer (PubMed:35985336). Interacts with matrix protein (By similarity). Interacts with host TRFC (PubMed:36779762). Interacts with host BST2; this interaction inhibits viral budding by tethering new virions to the cell surface (PubMed:37922253). Interacts with host ITGB1 (PubMed:31666383). Interacts with host GRM2 (PubMed:30028877).</text>
</comment>
<comment type="subcellular location">
    <subcellularLocation>
        <location evidence="8">Virion membrane</location>
        <topology evidence="8">Single-pass type I membrane protein</topology>
    </subcellularLocation>
</comment>
<comment type="PTM">
    <text evidence="1">Glycosylated and palmitoylated by host. Glycosylation is crucial for glycoprotein export at the cell surface (By similarity).</text>
</comment>
<comment type="biotechnology">
    <text>Primary surface antigen capable of inducing and reacting with virus-neutralizing antibodies. Almost all human and veterinary vaccines are based on the functional aspects of the G protein.</text>
</comment>
<comment type="miscellaneous">
    <text evidence="1">Arg-352 is highly involved in rabies virus pathogenicity. Its mutation dramatically attenuates the virus (By similarity).</text>
</comment>
<comment type="similarity">
    <text evidence="8">Belongs to the lyssavirus glycoprotein family.</text>
</comment>
<organism>
    <name type="scientific">Rabies virus (strain Pasteur vaccins / PV)</name>
    <name type="common">RABV</name>
    <dbReference type="NCBI Taxonomy" id="103929"/>
    <lineage>
        <taxon>Viruses</taxon>
        <taxon>Riboviria</taxon>
        <taxon>Orthornavirae</taxon>
        <taxon>Negarnaviricota</taxon>
        <taxon>Haploviricotina</taxon>
        <taxon>Monjiviricetes</taxon>
        <taxon>Mononegavirales</taxon>
        <taxon>Rhabdoviridae</taxon>
        <taxon>Alpharhabdovirinae</taxon>
        <taxon>Lyssavirus</taxon>
        <taxon>Lyssavirus rabies</taxon>
    </lineage>
</organism>
<evidence type="ECO:0000250" key="1"/>
<evidence type="ECO:0000255" key="2"/>
<evidence type="ECO:0000269" key="3">
    <source>
    </source>
</evidence>
<evidence type="ECO:0000269" key="4">
    <source>
    </source>
</evidence>
<evidence type="ECO:0000269" key="5">
    <source>
    </source>
</evidence>
<evidence type="ECO:0000269" key="6">
    <source>
    </source>
</evidence>
<evidence type="ECO:0000269" key="7">
    <source>
    </source>
</evidence>
<evidence type="ECO:0000305" key="8"/>
<evidence type="ECO:0007744" key="9">
    <source>
        <dbReference type="PDB" id="8A1E"/>
    </source>
</evidence>
<evidence type="ECO:0007829" key="10">
    <source>
        <dbReference type="PDB" id="7U9G"/>
    </source>
</evidence>
<evidence type="ECO:0007829" key="11">
    <source>
        <dbReference type="PDB" id="8A1E"/>
    </source>
</evidence>
<feature type="signal peptide">
    <location>
        <begin position="1"/>
        <end position="19"/>
    </location>
</feature>
<feature type="chain" id="PRO_0000040995" description="Glycoprotein">
    <location>
        <begin position="20"/>
        <end position="524"/>
    </location>
</feature>
<feature type="topological domain" description="Virion surface" evidence="2">
    <location>
        <begin position="20"/>
        <end position="459"/>
    </location>
</feature>
<feature type="transmembrane region" description="Helical" evidence="2">
    <location>
        <begin position="460"/>
        <end position="480"/>
    </location>
</feature>
<feature type="topological domain" description="Intravirion" evidence="2">
    <location>
        <begin position="481"/>
        <end position="524"/>
    </location>
</feature>
<feature type="lipid moiety-binding region" description="S-palmitoyl cysteine; by host" evidence="1">
    <location>
        <position position="479"/>
    </location>
</feature>
<feature type="glycosylation site" description="N-linked (GlcNAc...) asparagine; by host" evidence="1">
    <location>
        <position position="56"/>
    </location>
</feature>
<feature type="glycosylation site" description="N-linked (GlcNAc...) asparagine; by host" evidence="1">
    <location>
        <position position="266"/>
    </location>
</feature>
<feature type="glycosylation site" description="N-linked (GlcNAc...) asparagine; by host" evidence="1">
    <location>
        <position position="338"/>
    </location>
</feature>
<feature type="disulfide bond" evidence="5">
    <location>
        <begin position="43"/>
        <end position="302"/>
    </location>
</feature>
<feature type="disulfide bond" evidence="5">
    <location>
        <begin position="54"/>
        <end position="226"/>
    </location>
</feature>
<feature type="disulfide bond" evidence="5">
    <location>
        <begin position="80"/>
        <end position="113"/>
    </location>
</feature>
<feature type="disulfide bond" evidence="5">
    <location>
        <begin position="178"/>
        <end position="188"/>
    </location>
</feature>
<feature type="disulfide bond" evidence="5">
    <location>
        <begin position="208"/>
        <end position="247"/>
    </location>
</feature>
<feature type="disulfide bond" evidence="5">
    <location>
        <begin position="242"/>
        <end position="271"/>
    </location>
</feature>
<feature type="disulfide bond" evidence="5">
    <location>
        <begin position="363"/>
        <end position="370"/>
    </location>
</feature>
<feature type="mutagenesis site" description="Complete loss of RABV-G-mediated cell-cell fusion." evidence="5">
    <original>H</original>
    <variation>P</variation>
    <location>
        <position position="280"/>
    </location>
</feature>
<feature type="mutagenesis site" description="Complete loss of RABV-G-mediated cell-cell fusion." evidence="5">
    <original>H</original>
    <variation>P</variation>
    <location>
        <position position="289"/>
    </location>
</feature>
<feature type="strand" evidence="11">
    <location>
        <begin position="23"/>
        <end position="30"/>
    </location>
</feature>
<feature type="strand" evidence="11">
    <location>
        <begin position="34"/>
        <end position="36"/>
    </location>
</feature>
<feature type="helix" evidence="11">
    <location>
        <begin position="38"/>
        <end position="40"/>
    </location>
</feature>
<feature type="strand" evidence="11">
    <location>
        <begin position="57"/>
        <end position="65"/>
    </location>
</feature>
<feature type="strand" evidence="11">
    <location>
        <begin position="69"/>
        <end position="71"/>
    </location>
</feature>
<feature type="strand" evidence="11">
    <location>
        <begin position="77"/>
        <end position="80"/>
    </location>
</feature>
<feature type="strand" evidence="10">
    <location>
        <begin position="101"/>
        <end position="106"/>
    </location>
</feature>
<feature type="helix" evidence="11">
    <location>
        <begin position="112"/>
        <end position="121"/>
    </location>
</feature>
<feature type="helix" evidence="10">
    <location>
        <begin position="125"/>
        <end position="132"/>
    </location>
</feature>
<feature type="strand" evidence="10">
    <location>
        <begin position="145"/>
        <end position="153"/>
    </location>
</feature>
<feature type="strand" evidence="10">
    <location>
        <begin position="157"/>
        <end position="162"/>
    </location>
</feature>
<feature type="turn" evidence="11">
    <location>
        <begin position="163"/>
        <end position="165"/>
    </location>
</feature>
<feature type="strand" evidence="10">
    <location>
        <begin position="167"/>
        <end position="169"/>
    </location>
</feature>
<feature type="strand" evidence="11">
    <location>
        <begin position="171"/>
        <end position="173"/>
    </location>
</feature>
<feature type="helix" evidence="10">
    <location>
        <begin position="174"/>
        <end position="176"/>
    </location>
</feature>
<feature type="strand" evidence="11">
    <location>
        <begin position="181"/>
        <end position="184"/>
    </location>
</feature>
<feature type="strand" evidence="11">
    <location>
        <begin position="191"/>
        <end position="194"/>
    </location>
</feature>
<feature type="strand" evidence="11">
    <location>
        <begin position="196"/>
        <end position="198"/>
    </location>
</feature>
<feature type="strand" evidence="11">
    <location>
        <begin position="211"/>
        <end position="219"/>
    </location>
</feature>
<feature type="strand" evidence="11">
    <location>
        <begin position="221"/>
        <end position="224"/>
    </location>
</feature>
<feature type="strand" evidence="11">
    <location>
        <begin position="227"/>
        <end position="229"/>
    </location>
</feature>
<feature type="strand" evidence="11">
    <location>
        <begin position="235"/>
        <end position="237"/>
    </location>
</feature>
<feature type="strand" evidence="11">
    <location>
        <begin position="242"/>
        <end position="246"/>
    </location>
</feature>
<feature type="strand" evidence="11">
    <location>
        <begin position="249"/>
        <end position="253"/>
    </location>
</feature>
<feature type="strand" evidence="10">
    <location>
        <begin position="259"/>
        <end position="261"/>
    </location>
</feature>
<feature type="strand" evidence="10">
    <location>
        <begin position="266"/>
        <end position="268"/>
    </location>
</feature>
<feature type="helix" evidence="11">
    <location>
        <begin position="275"/>
        <end position="277"/>
    </location>
</feature>
<feature type="helix" evidence="10">
    <location>
        <begin position="283"/>
        <end position="287"/>
    </location>
</feature>
<feature type="helix" evidence="11">
    <location>
        <begin position="289"/>
        <end position="312"/>
    </location>
</feature>
<feature type="strand" evidence="10">
    <location>
        <begin position="314"/>
        <end position="316"/>
    </location>
</feature>
<feature type="helix" evidence="11">
    <location>
        <begin position="317"/>
        <end position="320"/>
    </location>
</feature>
<feature type="helix" evidence="11">
    <location>
        <begin position="321"/>
        <end position="323"/>
    </location>
</feature>
<feature type="strand" evidence="11">
    <location>
        <begin position="326"/>
        <end position="339"/>
    </location>
</feature>
<feature type="strand" evidence="11">
    <location>
        <begin position="341"/>
        <end position="351"/>
    </location>
</feature>
<feature type="turn" evidence="11">
    <location>
        <begin position="354"/>
        <end position="357"/>
    </location>
</feature>
<feature type="strand" evidence="11">
    <location>
        <begin position="365"/>
        <end position="370"/>
    </location>
</feature>
<feature type="strand" evidence="11">
    <location>
        <begin position="377"/>
        <end position="379"/>
    </location>
</feature>
<feature type="strand" evidence="11">
    <location>
        <begin position="382"/>
        <end position="384"/>
    </location>
</feature>
<feature type="helix" evidence="11">
    <location>
        <begin position="393"/>
        <end position="398"/>
    </location>
</feature>
<feature type="helix" evidence="11">
    <location>
        <begin position="404"/>
        <end position="406"/>
    </location>
</feature>
<feature type="strand" evidence="10">
    <location>
        <begin position="409"/>
        <end position="411"/>
    </location>
</feature>
<feature type="strand" evidence="10">
    <location>
        <begin position="417"/>
        <end position="419"/>
    </location>
</feature>
<reference key="1">
    <citation type="journal article" date="1986" name="Proc. Natl. Acad. Sci. U.S.A.">
        <title>Walking along the rabies genome: is the large G-L intergenic region a remnant gene?</title>
        <authorList>
            <person name="Tordo N."/>
            <person name="Poch O."/>
            <person name="Ermine A."/>
            <person name="Keith G."/>
            <person name="Rougeon F."/>
        </authorList>
    </citation>
    <scope>NUCLEOTIDE SEQUENCE [GENOMIC RNA]</scope>
</reference>
<reference key="2">
    <citation type="journal article" date="2018" name="PLoS Pathog.">
        <title>Metabotropic glutamate receptor subtype 2 is a cellular receptor for rabies virus.</title>
        <authorList>
            <person name="Wang J."/>
            <person name="Wang Z."/>
            <person name="Liu R."/>
            <person name="Shuai L."/>
            <person name="Wang X."/>
            <person name="Luo J."/>
            <person name="Wang C."/>
            <person name="Chen W."/>
            <person name="Wang X."/>
            <person name="Ge J."/>
            <person name="He X."/>
            <person name="Wen Z."/>
            <person name="Bu Z."/>
        </authorList>
    </citation>
    <scope>FUNCTION</scope>
    <scope>INTERACTION WITH HOST GRM2</scope>
</reference>
<reference key="3">
    <citation type="journal article" date="2020" name="J. Virol.">
        <title>Integrin beta1 Promotes Peripheral Entry by Rabies Virus.</title>
        <authorList>
            <person name="Shuai L."/>
            <person name="Wang J."/>
            <person name="Zhao D."/>
            <person name="Wen Z."/>
            <person name="Ge J."/>
            <person name="He X."/>
            <person name="Wang X."/>
            <person name="Bu Z."/>
        </authorList>
    </citation>
    <scope>FUNCTION</scope>
    <scope>INTERACTION WITH ITGB1</scope>
</reference>
<reference key="4">
    <citation type="journal article" date="2023" name="PLoS ONE">
        <title>Human BST2 inhibits rabies virus release independently of cysteine-linked dimerization and asparagine-linked glycosylation.</title>
        <authorList>
            <person name="Tanwattana N."/>
            <person name="Wanasen N."/>
            <person name="Jantraphakorn Y."/>
            <person name="Srisutthisamphan K."/>
            <person name="Chailungkarn T."/>
            <person name="Boonrungsiman S."/>
            <person name="Lumlertdacha B."/>
            <person name="Lekchareonsuk P."/>
            <person name="Kaewborisuth C."/>
        </authorList>
    </citation>
    <scope>INTERACTION WITH HOST BST2</scope>
</reference>
<reference key="5">
    <citation type="journal article" date="2023" name="J. Virol.">
        <title>Transferrin Receptor Protein 1 Is an Entry Factor for Rabies Virus.</title>
        <authorList>
            <person name="Wang X."/>
            <person name="Wen Z."/>
            <person name="Cao H."/>
            <person name="Luo J."/>
            <person name="Shuai L."/>
            <person name="Wang C."/>
            <person name="Ge J."/>
            <person name="Wang X."/>
            <person name="Bu Z."/>
            <person name="Wang J."/>
        </authorList>
    </citation>
    <scope>FUNCTION</scope>
    <scope>INTERACTION WITH HOST TFRC</scope>
</reference>
<reference evidence="9" key="6">
    <citation type="journal article" date="2022" name="Cell Host Microbe">
        <title>Structure of trimeric pre-fusion rabies virus glycoprotein in complex with two protective antibodies.</title>
        <authorList>
            <person name="Ng W.M."/>
            <person name="Fedosyuk S."/>
            <person name="English S."/>
            <person name="Augusto G."/>
            <person name="Berg A."/>
            <person name="Thorley L."/>
            <person name="Haselon A.S."/>
            <person name="Segireddy R.R."/>
            <person name="Bowden T.A."/>
            <person name="Douglas A.D."/>
        </authorList>
    </citation>
    <scope>STRUCTURE BY ELECTRON MICROSCOPY (2.83 ANGSTROMS) OF 20-524</scope>
    <scope>DISULFIDE BONDS</scope>
    <scope>SUBUNIT</scope>
    <scope>MUTAGENESIS OF HIS-280 AND HIS-289</scope>
</reference>
<dbReference type="EMBL" id="M13215">
    <property type="protein sequence ID" value="AAA47218.1"/>
    <property type="molecule type" value="Genomic_RNA"/>
</dbReference>
<dbReference type="PIR" id="C26275">
    <property type="entry name" value="VGVNRV"/>
</dbReference>
<dbReference type="RefSeq" id="NP_056796.1">
    <property type="nucleotide sequence ID" value="NC_001542.1"/>
</dbReference>
<dbReference type="PDB" id="7U9G">
    <property type="method" value="EM"/>
    <property type="resolution" value="3.39 A"/>
    <property type="chains" value="A/B/C=1-439"/>
</dbReference>
<dbReference type="PDB" id="8A1E">
    <property type="method" value="EM"/>
    <property type="resolution" value="2.83 A"/>
    <property type="chains" value="A=20-524"/>
</dbReference>
<dbReference type="PDBsum" id="7U9G"/>
<dbReference type="PDBsum" id="8A1E"/>
<dbReference type="EMDB" id="EMD-15073"/>
<dbReference type="EMDB" id="EMD-26397"/>
<dbReference type="EMDB" id="EMD-26398"/>
<dbReference type="EMDB" id="EMD-26399"/>
<dbReference type="EMDB" id="EMD-26400"/>
<dbReference type="SMR" id="P08667"/>
<dbReference type="DrugBank" id="DB11603">
    <property type="generic name" value="Rabies immune globulin, human"/>
</dbReference>
<dbReference type="GlyCosmos" id="P08667">
    <property type="glycosylation" value="3 sites, No reported glycans"/>
</dbReference>
<dbReference type="ABCD" id="P08667">
    <property type="antibodies" value="147 sequenced antibodies"/>
</dbReference>
<dbReference type="DNASU" id="1489856"/>
<dbReference type="KEGG" id="vg:1489856"/>
<dbReference type="Proteomes" id="UP000008649">
    <property type="component" value="Segment"/>
</dbReference>
<dbReference type="GO" id="GO:0016020">
    <property type="term" value="C:membrane"/>
    <property type="evidence" value="ECO:0007669"/>
    <property type="project" value="UniProtKB-KW"/>
</dbReference>
<dbReference type="GO" id="GO:0019031">
    <property type="term" value="C:viral envelope"/>
    <property type="evidence" value="ECO:0007669"/>
    <property type="project" value="UniProtKB-KW"/>
</dbReference>
<dbReference type="GO" id="GO:0036338">
    <property type="term" value="C:viral membrane"/>
    <property type="evidence" value="ECO:0000314"/>
    <property type="project" value="UniProtKB"/>
</dbReference>
<dbReference type="GO" id="GO:0055036">
    <property type="term" value="C:virion membrane"/>
    <property type="evidence" value="ECO:0007669"/>
    <property type="project" value="UniProtKB-SubCell"/>
</dbReference>
<dbReference type="GO" id="GO:0098670">
    <property type="term" value="P:entry receptor-mediated virion attachment to host cell"/>
    <property type="evidence" value="ECO:0000314"/>
    <property type="project" value="UniProtKB"/>
</dbReference>
<dbReference type="GO" id="GO:0039654">
    <property type="term" value="P:fusion of virus membrane with host endosome membrane"/>
    <property type="evidence" value="ECO:0000314"/>
    <property type="project" value="UniProtKB"/>
</dbReference>
<dbReference type="Gene3D" id="2.30.29.130">
    <property type="match status" value="1"/>
</dbReference>
<dbReference type="InterPro" id="IPR055448">
    <property type="entry name" value="PH_Rhabdo_glycop"/>
</dbReference>
<dbReference type="InterPro" id="IPR055447">
    <property type="entry name" value="Rhabdo_glycop_CD"/>
</dbReference>
<dbReference type="InterPro" id="IPR001903">
    <property type="entry name" value="Rhabdo_glycop_FD"/>
</dbReference>
<dbReference type="Pfam" id="PF24834">
    <property type="entry name" value="PH_Rhabdo_glycop"/>
    <property type="match status" value="1"/>
</dbReference>
<dbReference type="Pfam" id="PF24833">
    <property type="entry name" value="Rhabdo_glycop_CD"/>
    <property type="match status" value="1"/>
</dbReference>
<dbReference type="Pfam" id="PF00974">
    <property type="entry name" value="Rhabdo_glycop_FD"/>
    <property type="match status" value="1"/>
</dbReference>
<dbReference type="SUPFAM" id="SSF161008">
    <property type="entry name" value="Viral glycoprotein ectodomain-like"/>
    <property type="match status" value="1"/>
</dbReference>
<accession>P08667</accession>